<dbReference type="EMBL" id="U12386">
    <property type="protein sequence ID" value="AAD11829.1"/>
    <property type="molecule type" value="Genomic_DNA"/>
</dbReference>
<dbReference type="PIR" id="S53837">
    <property type="entry name" value="S53837"/>
</dbReference>
<dbReference type="RefSeq" id="NP_042536.1">
    <property type="nucleotide sequence ID" value="NC_001637.1"/>
</dbReference>
<dbReference type="SMR" id="Q37377"/>
<dbReference type="GeneID" id="1734033"/>
<dbReference type="GO" id="GO:0031966">
    <property type="term" value="C:mitochondrial membrane"/>
    <property type="evidence" value="ECO:0007669"/>
    <property type="project" value="UniProtKB-SubCell"/>
</dbReference>
<dbReference type="GO" id="GO:0045259">
    <property type="term" value="C:proton-transporting ATP synthase complex"/>
    <property type="evidence" value="ECO:0007669"/>
    <property type="project" value="UniProtKB-KW"/>
</dbReference>
<dbReference type="GO" id="GO:0033177">
    <property type="term" value="C:proton-transporting two-sector ATPase complex, proton-transporting domain"/>
    <property type="evidence" value="ECO:0007669"/>
    <property type="project" value="InterPro"/>
</dbReference>
<dbReference type="GO" id="GO:0008289">
    <property type="term" value="F:lipid binding"/>
    <property type="evidence" value="ECO:0007669"/>
    <property type="project" value="UniProtKB-KW"/>
</dbReference>
<dbReference type="GO" id="GO:0015078">
    <property type="term" value="F:proton transmembrane transporter activity"/>
    <property type="evidence" value="ECO:0007669"/>
    <property type="project" value="InterPro"/>
</dbReference>
<dbReference type="GO" id="GO:0015986">
    <property type="term" value="P:proton motive force-driven ATP synthesis"/>
    <property type="evidence" value="ECO:0007669"/>
    <property type="project" value="InterPro"/>
</dbReference>
<dbReference type="CDD" id="cd18182">
    <property type="entry name" value="ATP-synt_Fo_c_ATP5G3"/>
    <property type="match status" value="1"/>
</dbReference>
<dbReference type="FunFam" id="1.20.20.10:FF:000008">
    <property type="entry name" value="ATPase subunit 9 homolog"/>
    <property type="match status" value="1"/>
</dbReference>
<dbReference type="Gene3D" id="1.20.20.10">
    <property type="entry name" value="F1F0 ATP synthase subunit C"/>
    <property type="match status" value="1"/>
</dbReference>
<dbReference type="HAMAP" id="MF_01396">
    <property type="entry name" value="ATP_synth_c_bact"/>
    <property type="match status" value="1"/>
</dbReference>
<dbReference type="InterPro" id="IPR000454">
    <property type="entry name" value="ATP_synth_F0_csu"/>
</dbReference>
<dbReference type="InterPro" id="IPR020537">
    <property type="entry name" value="ATP_synth_F0_csu_DDCD_BS"/>
</dbReference>
<dbReference type="InterPro" id="IPR038662">
    <property type="entry name" value="ATP_synth_F0_csu_sf"/>
</dbReference>
<dbReference type="InterPro" id="IPR002379">
    <property type="entry name" value="ATPase_proteolipid_c-like_dom"/>
</dbReference>
<dbReference type="InterPro" id="IPR035921">
    <property type="entry name" value="F/V-ATP_Csub_sf"/>
</dbReference>
<dbReference type="PANTHER" id="PTHR10031">
    <property type="entry name" value="ATP SYNTHASE LIPID-BINDING PROTEIN, MITOCHONDRIAL"/>
    <property type="match status" value="1"/>
</dbReference>
<dbReference type="PANTHER" id="PTHR10031:SF0">
    <property type="entry name" value="ATPASE PROTEIN 9"/>
    <property type="match status" value="1"/>
</dbReference>
<dbReference type="Pfam" id="PF00137">
    <property type="entry name" value="ATP-synt_C"/>
    <property type="match status" value="1"/>
</dbReference>
<dbReference type="PRINTS" id="PR00124">
    <property type="entry name" value="ATPASEC"/>
</dbReference>
<dbReference type="SUPFAM" id="SSF81333">
    <property type="entry name" value="F1F0 ATP synthase subunit C"/>
    <property type="match status" value="1"/>
</dbReference>
<dbReference type="PROSITE" id="PS00605">
    <property type="entry name" value="ATPASE_C"/>
    <property type="match status" value="1"/>
</dbReference>
<feature type="chain" id="PRO_0000112227" description="ATP synthase subunit 9, mitochondrial">
    <location>
        <begin position="1"/>
        <end position="79"/>
    </location>
</feature>
<feature type="transmembrane region" description="Helical" evidence="2">
    <location>
        <begin position="21"/>
        <end position="41"/>
    </location>
</feature>
<feature type="transmembrane region" description="Helical" evidence="2">
    <location>
        <begin position="59"/>
        <end position="79"/>
    </location>
</feature>
<feature type="site" description="Reversibly protonated during proton transport" evidence="1">
    <location>
        <position position="63"/>
    </location>
</feature>
<geneLocation type="mitochondrion"/>
<reference key="1">
    <citation type="journal article" date="1995" name="J. Mol. Biol.">
        <title>The mitochondrial DNA of the amoeboid protozoon, Acanthamoeba castellanii: complete sequence, gene content and genome organization.</title>
        <authorList>
            <person name="Burger G."/>
            <person name="Plante I."/>
            <person name="Lonergan K.M."/>
            <person name="Gray M.W."/>
        </authorList>
    </citation>
    <scope>NUCLEOTIDE SEQUENCE [GENOMIC DNA]</scope>
    <source>
        <strain>ATCC 30010 / Neff</strain>
    </source>
</reference>
<proteinExistence type="inferred from homology"/>
<organism>
    <name type="scientific">Acanthamoeba castellanii</name>
    <name type="common">Amoeba</name>
    <dbReference type="NCBI Taxonomy" id="5755"/>
    <lineage>
        <taxon>Eukaryota</taxon>
        <taxon>Amoebozoa</taxon>
        <taxon>Discosea</taxon>
        <taxon>Longamoebia</taxon>
        <taxon>Centramoebida</taxon>
        <taxon>Acanthamoebidae</taxon>
        <taxon>Acanthamoeba</taxon>
    </lineage>
</organism>
<sequence length="79" mass="8246">MKNLEIILQSSKMIGSGLATSGLIGAGAGVGIVFGCLILAFSRNPNLQKELFSYALIGFALTEAIGLLALVMAFLILFI</sequence>
<name>ATP9_ACACA</name>
<gene>
    <name type="primary">ATP9</name>
</gene>
<protein>
    <recommendedName>
        <fullName>ATP synthase subunit 9, mitochondrial</fullName>
    </recommendedName>
    <alternativeName>
        <fullName>Lipid-binding protein</fullName>
    </alternativeName>
</protein>
<comment type="function">
    <text>Mitochondrial membrane ATP synthase (F(1)F(0) ATP synthase or Complex V) produces ATP from ADP in the presence of a proton gradient across the membrane which is generated by electron transport complexes of the respiratory chain. F-type ATPases consist of two structural domains, F(1) - containing the extramembraneous catalytic core and F(0) - containing the membrane proton channel, linked together by a central stalk and a peripheral stalk. During catalysis, ATP synthesis in the catalytic domain of F(1) is coupled via a rotary mechanism of the central stalk subunits to proton translocation. Part of the complex F(0) domain. A homomeric c-ring of probably 10 subunits is part of the complex rotary element.</text>
</comment>
<comment type="subunit">
    <text>F-type ATPases have 2 components, CF(1) - the catalytic core - and CF(0) - the membrane proton channel. CF(1) has five subunits: alpha(3), beta(3), gamma(1), delta(1), epsilon(1). CF(0) has three main subunits: a, b and c.</text>
</comment>
<comment type="subcellular location">
    <subcellularLocation>
        <location evidence="3">Mitochondrion membrane</location>
        <topology evidence="3">Multi-pass membrane protein</topology>
    </subcellularLocation>
</comment>
<comment type="similarity">
    <text evidence="3">Belongs to the ATPase C chain family.</text>
</comment>
<keyword id="KW-0138">CF(0)</keyword>
<keyword id="KW-0375">Hydrogen ion transport</keyword>
<keyword id="KW-0406">Ion transport</keyword>
<keyword id="KW-0446">Lipid-binding</keyword>
<keyword id="KW-0472">Membrane</keyword>
<keyword id="KW-0496">Mitochondrion</keyword>
<keyword id="KW-0812">Transmembrane</keyword>
<keyword id="KW-1133">Transmembrane helix</keyword>
<keyword id="KW-0813">Transport</keyword>
<evidence type="ECO:0000250" key="1"/>
<evidence type="ECO:0000255" key="2"/>
<evidence type="ECO:0000305" key="3"/>
<accession>Q37377</accession>